<keyword id="KW-0150">Chloroplast</keyword>
<keyword id="KW-0934">Plastid</keyword>
<comment type="subcellular location">
    <subcellularLocation>
        <location>Plastid</location>
        <location>Chloroplast</location>
    </subcellularLocation>
</comment>
<feature type="chain" id="PRO_0000277379" description="Uncharacterized protein ORF58">
    <location>
        <begin position="1"/>
        <end position="58"/>
    </location>
</feature>
<geneLocation type="chloroplast"/>
<reference key="1">
    <citation type="submission" date="2003-11" db="EMBL/GenBank/DDBJ databases">
        <title>Whole genome sequence of Porphyra yezoensis chloroplast.</title>
        <authorList>
            <person name="Kunimoto M."/>
            <person name="Morishima K."/>
            <person name="Yoshikawa M."/>
            <person name="Fukuda S."/>
            <person name="Kobayashi T."/>
            <person name="Kobayashi M."/>
            <person name="Okazaki T."/>
            <person name="Ohara I."/>
            <person name="Nakayama I."/>
        </authorList>
    </citation>
    <scope>NUCLEOTIDE SEQUENCE [LARGE SCALE GENOMIC DNA]</scope>
    <source>
        <strain>U-51</strain>
    </source>
</reference>
<accession>Q1XDR4</accession>
<proteinExistence type="predicted"/>
<organism>
    <name type="scientific">Pyropia yezoensis</name>
    <name type="common">Susabi-nori</name>
    <name type="synonym">Porphyra yezoensis</name>
    <dbReference type="NCBI Taxonomy" id="2788"/>
    <lineage>
        <taxon>Eukaryota</taxon>
        <taxon>Rhodophyta</taxon>
        <taxon>Bangiophyceae</taxon>
        <taxon>Bangiales</taxon>
        <taxon>Bangiaceae</taxon>
        <taxon>Pyropia</taxon>
    </lineage>
</organism>
<protein>
    <recommendedName>
        <fullName>Uncharacterized protein ORF58</fullName>
    </recommendedName>
</protein>
<dbReference type="EMBL" id="AP006715">
    <property type="protein sequence ID" value="BAE92347.1"/>
    <property type="molecule type" value="Genomic_DNA"/>
</dbReference>
<dbReference type="RefSeq" id="YP_536904.1">
    <property type="nucleotide sequence ID" value="NC_007932.1"/>
</dbReference>
<dbReference type="GeneID" id="3978906"/>
<dbReference type="GO" id="GO:0009507">
    <property type="term" value="C:chloroplast"/>
    <property type="evidence" value="ECO:0007669"/>
    <property type="project" value="UniProtKB-SubCell"/>
</dbReference>
<sequence length="58" mass="6433">MQANSNKPNDNFYNSVDMQELSGETPVGWSATCLDQTICYYLNCDQESSAESDNSDSN</sequence>
<name>YCX9_PYRYE</name>